<name>RL36_YERPG</name>
<protein>
    <recommendedName>
        <fullName evidence="1">Large ribosomal subunit protein bL36</fullName>
    </recommendedName>
    <alternativeName>
        <fullName evidence="2">50S ribosomal protein L36</fullName>
    </alternativeName>
</protein>
<dbReference type="EMBL" id="CP000901">
    <property type="protein sequence ID" value="ABX86829.1"/>
    <property type="molecule type" value="Genomic_DNA"/>
</dbReference>
<dbReference type="SMR" id="A9QZN1"/>
<dbReference type="KEGG" id="ypg:YpAngola_A3032"/>
<dbReference type="PATRIC" id="fig|349746.12.peg.4085"/>
<dbReference type="GO" id="GO:1990904">
    <property type="term" value="C:ribonucleoprotein complex"/>
    <property type="evidence" value="ECO:0007669"/>
    <property type="project" value="UniProtKB-KW"/>
</dbReference>
<dbReference type="GO" id="GO:0005840">
    <property type="term" value="C:ribosome"/>
    <property type="evidence" value="ECO:0007669"/>
    <property type="project" value="UniProtKB-KW"/>
</dbReference>
<dbReference type="GO" id="GO:0003735">
    <property type="term" value="F:structural constituent of ribosome"/>
    <property type="evidence" value="ECO:0007669"/>
    <property type="project" value="InterPro"/>
</dbReference>
<dbReference type="GO" id="GO:0006412">
    <property type="term" value="P:translation"/>
    <property type="evidence" value="ECO:0007669"/>
    <property type="project" value="UniProtKB-UniRule"/>
</dbReference>
<dbReference type="HAMAP" id="MF_00251">
    <property type="entry name" value="Ribosomal_bL36"/>
    <property type="match status" value="1"/>
</dbReference>
<dbReference type="InterPro" id="IPR000473">
    <property type="entry name" value="Ribosomal_bL36"/>
</dbReference>
<dbReference type="InterPro" id="IPR035977">
    <property type="entry name" value="Ribosomal_bL36_sp"/>
</dbReference>
<dbReference type="InterPro" id="IPR047621">
    <property type="entry name" value="Ribosomal_L36_bact"/>
</dbReference>
<dbReference type="NCBIfam" id="NF002021">
    <property type="entry name" value="PRK00831.1"/>
    <property type="match status" value="1"/>
</dbReference>
<dbReference type="NCBIfam" id="TIGR01022">
    <property type="entry name" value="rpmJ_bact"/>
    <property type="match status" value="1"/>
</dbReference>
<dbReference type="PANTHER" id="PTHR47781">
    <property type="entry name" value="50S RIBOSOMAL PROTEIN L36 2"/>
    <property type="match status" value="1"/>
</dbReference>
<dbReference type="PANTHER" id="PTHR47781:SF1">
    <property type="entry name" value="LARGE RIBOSOMAL SUBUNIT PROTEIN BL36B"/>
    <property type="match status" value="1"/>
</dbReference>
<dbReference type="Pfam" id="PF00444">
    <property type="entry name" value="Ribosomal_L36"/>
    <property type="match status" value="1"/>
</dbReference>
<dbReference type="SUPFAM" id="SSF57840">
    <property type="entry name" value="Ribosomal protein L36"/>
    <property type="match status" value="1"/>
</dbReference>
<dbReference type="PROSITE" id="PS00828">
    <property type="entry name" value="RIBOSOMAL_L36"/>
    <property type="match status" value="1"/>
</dbReference>
<reference key="1">
    <citation type="journal article" date="2010" name="J. Bacteriol.">
        <title>Genome sequence of the deep-rooted Yersinia pestis strain Angola reveals new insights into the evolution and pangenome of the plague bacterium.</title>
        <authorList>
            <person name="Eppinger M."/>
            <person name="Worsham P.L."/>
            <person name="Nikolich M.P."/>
            <person name="Riley D.R."/>
            <person name="Sebastian Y."/>
            <person name="Mou S."/>
            <person name="Achtman M."/>
            <person name="Lindler L.E."/>
            <person name="Ravel J."/>
        </authorList>
    </citation>
    <scope>NUCLEOTIDE SEQUENCE [LARGE SCALE GENOMIC DNA]</scope>
    <source>
        <strain>Angola</strain>
    </source>
</reference>
<proteinExistence type="inferred from homology"/>
<keyword id="KW-0687">Ribonucleoprotein</keyword>
<keyword id="KW-0689">Ribosomal protein</keyword>
<organism>
    <name type="scientific">Yersinia pestis bv. Antiqua (strain Angola)</name>
    <dbReference type="NCBI Taxonomy" id="349746"/>
    <lineage>
        <taxon>Bacteria</taxon>
        <taxon>Pseudomonadati</taxon>
        <taxon>Pseudomonadota</taxon>
        <taxon>Gammaproteobacteria</taxon>
        <taxon>Enterobacterales</taxon>
        <taxon>Yersiniaceae</taxon>
        <taxon>Yersinia</taxon>
    </lineage>
</organism>
<gene>
    <name evidence="1" type="primary">rpmJ</name>
    <name type="ordered locus">YpAngola_A3032</name>
</gene>
<accession>A9QZN1</accession>
<evidence type="ECO:0000255" key="1">
    <source>
        <dbReference type="HAMAP-Rule" id="MF_00251"/>
    </source>
</evidence>
<evidence type="ECO:0000305" key="2"/>
<feature type="chain" id="PRO_0000344733" description="Large ribosomal subunit protein bL36">
    <location>
        <begin position="1"/>
        <end position="47"/>
    </location>
</feature>
<sequence length="47" mass="5463">MQVLSSLRSAKNRHPDCKIVRRRGRVYVICKSNPRFKAVQGGTHKKR</sequence>
<comment type="similarity">
    <text evidence="1">Belongs to the bacterial ribosomal protein bL36 family.</text>
</comment>